<evidence type="ECO:0000250" key="1"/>
<evidence type="ECO:0000255" key="2">
    <source>
        <dbReference type="PROSITE-ProRule" id="PRU00561"/>
    </source>
</evidence>
<evidence type="ECO:0000256" key="3">
    <source>
        <dbReference type="SAM" id="MobiDB-lite"/>
    </source>
</evidence>
<evidence type="ECO:0000269" key="4">
    <source>
    </source>
</evidence>
<evidence type="ECO:0000269" key="5">
    <source>
    </source>
</evidence>
<evidence type="ECO:0000269" key="6">
    <source>
    </source>
</evidence>
<evidence type="ECO:0000305" key="7"/>
<evidence type="ECO:0007744" key="8">
    <source>
    </source>
</evidence>
<evidence type="ECO:0007744" key="9">
    <source>
    </source>
</evidence>
<evidence type="ECO:0007744" key="10">
    <source>
    </source>
</evidence>
<evidence type="ECO:0007744" key="11">
    <source>
    </source>
</evidence>
<evidence type="ECO:0007744" key="12">
    <source>
    </source>
</evidence>
<evidence type="ECO:0007829" key="13">
    <source>
        <dbReference type="PDB" id="4UAD"/>
    </source>
</evidence>
<comment type="function">
    <text evidence="4">Functions in nuclear protein import as an adapter protein for nuclear receptor KPNB1. Binds specifically and directly to substrates containing either a simple or bipartite NLS motif. Docking of the importin/substrate complex to the nuclear pore complex (NPC) is mediated by KPNB1 through binding to nucleoporin FxFG repeats and the complex is subsequently translocated through the pore by an energy requiring, Ran-dependent mechanism. At the nucleoplasmic side of the NPC, Ran binds to importin-beta and the three components separate and importin-alpha and -beta are re-exported from the nucleus to the cytoplasm where GTP hydrolysis releases Ran from importin. The directionality of nuclear import is thought to be conferred by an asymmetric distribution of the GTP- and GDP-bound forms of Ran between the cytoplasm and nucleus.</text>
</comment>
<comment type="subunit">
    <text evidence="1 4">Interacts with ZIC3 (By similarity). Forms a complex with importin subunit beta-1.</text>
</comment>
<comment type="subunit">
    <text evidence="5">(Microbial infection) Interacts with ebolavirus protein VP24.</text>
</comment>
<comment type="subunit">
    <text evidence="6">(Microbial infection) Interacts with human parainfluenza virus type 2 proteins P and V.</text>
</comment>
<comment type="interaction">
    <interactant intactId="EBI-359923">
        <id>O60684</id>
    </interactant>
    <interactant intactId="EBI-17183751">
        <id>X5D778</id>
        <label>ANKRD11</label>
    </interactant>
    <organismsDiffer>false</organismsDiffer>
    <experiments>5</experiments>
</comment>
<comment type="interaction">
    <interactant intactId="EBI-359923">
        <id>O60684</id>
    </interactant>
    <interactant intactId="EBI-762428">
        <id>Q92688</id>
        <label>ANP32B</label>
    </interactant>
    <organismsDiffer>false</organismsDiffer>
    <experiments>4</experiments>
</comment>
<comment type="interaction">
    <interactant intactId="EBI-359923">
        <id>O60684</id>
    </interactant>
    <interactant intactId="EBI-3917181">
        <id>Q96C86</id>
        <label>DCPS</label>
    </interactant>
    <organismsDiffer>false</organismsDiffer>
    <experiments>5</experiments>
</comment>
<comment type="interaction">
    <interactant intactId="EBI-359923">
        <id>O60684</id>
    </interactant>
    <interactant intactId="EBI-6658203">
        <id>Q86YD7</id>
        <label>FAM90A1</label>
    </interactant>
    <organismsDiffer>false</organismsDiffer>
    <experiments>3</experiments>
</comment>
<comment type="interaction">
    <interactant intactId="EBI-359923">
        <id>O60684</id>
    </interactant>
    <interactant intactId="EBI-443648">
        <id>O14893</id>
        <label>GEMIN2</label>
    </interactant>
    <organismsDiffer>false</organismsDiffer>
    <experiments>5</experiments>
</comment>
<comment type="interaction">
    <interactant intactId="EBI-359923">
        <id>O60684</id>
    </interactant>
    <interactant intactId="EBI-1749782">
        <id>P01583</id>
        <label>IL1A</label>
    </interactant>
    <organismsDiffer>false</organismsDiffer>
    <experiments>3</experiments>
</comment>
<comment type="interaction">
    <interactant intactId="EBI-359923">
        <id>O60684</id>
    </interactant>
    <interactant intactId="EBI-2650369">
        <id>Q14653</id>
        <label>IRF3</label>
    </interactant>
    <organismsDiffer>false</organismsDiffer>
    <experiments>3</experiments>
</comment>
<comment type="interaction">
    <interactant intactId="EBI-359923">
        <id>O60684</id>
    </interactant>
    <interactant intactId="EBI-17181882">
        <id>O75564-2</id>
        <label>JRK</label>
    </interactant>
    <organismsDiffer>false</organismsDiffer>
    <experiments>3</experiments>
</comment>
<comment type="interaction">
    <interactant intactId="EBI-359923">
        <id>O60684</id>
    </interactant>
    <interactant intactId="EBI-399080">
        <id>Q92993</id>
        <label>KAT5</label>
    </interactant>
    <organismsDiffer>false</organismsDiffer>
    <experiments>3</experiments>
</comment>
<comment type="interaction">
    <interactant intactId="EBI-359923">
        <id>O60684</id>
    </interactant>
    <interactant intactId="EBI-286758">
        <id>Q14974</id>
        <label>KPNB1</label>
    </interactant>
    <organismsDiffer>false</organismsDiffer>
    <experiments>4</experiments>
</comment>
<comment type="interaction">
    <interactant intactId="EBI-359923">
        <id>O60684</id>
    </interactant>
    <interactant intactId="EBI-968218">
        <id>P20700</id>
        <label>LMNB1</label>
    </interactant>
    <organismsDiffer>false</organismsDiffer>
    <experiments>4</experiments>
</comment>
<comment type="interaction">
    <interactant intactId="EBI-359923">
        <id>O60684</id>
    </interactant>
    <interactant intactId="EBI-716006">
        <id>Q9Y5V3</id>
        <label>MAGED1</label>
    </interactant>
    <organismsDiffer>false</organismsDiffer>
    <experiments>3</experiments>
</comment>
<comment type="interaction">
    <interactant intactId="EBI-359923">
        <id>O60684</id>
    </interactant>
    <interactant intactId="EBI-3917542">
        <id>Q9HAN9</id>
        <label>NMNAT1</label>
    </interactant>
    <organismsDiffer>false</organismsDiffer>
    <experiments>3</experiments>
</comment>
<comment type="interaction">
    <interactant intactId="EBI-359923">
        <id>O60684</id>
    </interactant>
    <interactant intactId="EBI-356811">
        <id>P46087</id>
        <label>NOP2</label>
    </interactant>
    <organismsDiffer>false</organismsDiffer>
    <experiments>3</experiments>
</comment>
<comment type="interaction">
    <interactant intactId="EBI-359923">
        <id>O60684</id>
    </interactant>
    <interactant intactId="EBI-2371082">
        <id>Q9UKX7</id>
        <label>NUP50</label>
    </interactant>
    <organismsDiffer>false</organismsDiffer>
    <experiments>8</experiments>
</comment>
<comment type="interaction">
    <interactant intactId="EBI-359923">
        <id>O60684</id>
    </interactant>
    <interactant intactId="EBI-5452779">
        <id>Q9BUI4</id>
        <label>POLR3C</label>
    </interactant>
    <organismsDiffer>false</organismsDiffer>
    <experiments>5</experiments>
</comment>
<comment type="interaction">
    <interactant intactId="EBI-359923">
        <id>O60684</id>
    </interactant>
    <interactant intactId="EBI-11956563">
        <id>Q96HA1-2</id>
        <label>POM121</label>
    </interactant>
    <organismsDiffer>false</organismsDiffer>
    <experiments>3</experiments>
</comment>
<comment type="interaction">
    <interactant intactId="EBI-359923">
        <id>O60684</id>
    </interactant>
    <interactant intactId="EBI-12029004">
        <id>P78424</id>
        <label>POU6F2</label>
    </interactant>
    <organismsDiffer>false</organismsDiffer>
    <experiments>3</experiments>
</comment>
<comment type="interaction">
    <interactant intactId="EBI-359923">
        <id>O60684</id>
    </interactant>
    <interactant intactId="EBI-877832">
        <id>O43148</id>
        <label>RNMT</label>
    </interactant>
    <organismsDiffer>false</organismsDiffer>
    <experiments>6</experiments>
</comment>
<comment type="interaction">
    <interactant intactId="EBI-359923">
        <id>O60684</id>
    </interactant>
    <interactant intactId="EBI-744603">
        <id>Q15637</id>
        <label>SF1</label>
    </interactant>
    <organismsDiffer>false</organismsDiffer>
    <experiments>4</experiments>
</comment>
<comment type="interaction">
    <interactant intactId="EBI-359923">
        <id>O60684</id>
    </interactant>
    <interactant intactId="EBI-712521">
        <id>Q16594</id>
        <label>TAF9</label>
    </interactant>
    <organismsDiffer>false</organismsDiffer>
    <experiments>4</experiments>
</comment>
<comment type="interaction">
    <interactant intactId="EBI-359923">
        <id>O60684</id>
    </interactant>
    <interactant intactId="EBI-2547640">
        <id>P03466</id>
        <label>NP</label>
    </interactant>
    <organismsDiffer>true</organismsDiffer>
    <experiments>5</experiments>
</comment>
<comment type="interaction">
    <interactant intactId="EBI-359923">
        <id>O60684</id>
    </interactant>
    <interactant intactId="EBI-6051231">
        <id>P31345</id>
        <label>PB2</label>
    </interactant>
    <organismsDiffer>true</organismsDiffer>
    <experiments>3</experiments>
</comment>
<comment type="interaction">
    <interactant intactId="EBI-359923">
        <id>O60684</id>
    </interactant>
    <interactant intactId="EBI-6153153">
        <id>Q05322</id>
        <label>VP24</label>
    </interactant>
    <organismsDiffer>true</organismsDiffer>
    <experiments>7</experiments>
</comment>
<comment type="tissue specificity">
    <text evidence="4">Widely expressed.</text>
</comment>
<comment type="similarity">
    <text evidence="7">Belongs to the importin alpha family.</text>
</comment>
<feature type="chain" id="PRO_0000120729" description="Importin subunit alpha-7">
    <location>
        <begin position="1"/>
        <end position="536"/>
    </location>
</feature>
<feature type="domain" description="IBB" evidence="2">
    <location>
        <begin position="1"/>
        <end position="60"/>
    </location>
</feature>
<feature type="repeat" description="ARM 1; truncated">
    <location>
        <begin position="76"/>
        <end position="115"/>
    </location>
</feature>
<feature type="repeat" description="ARM 2">
    <location>
        <begin position="116"/>
        <end position="159"/>
    </location>
</feature>
<feature type="repeat" description="ARM 3">
    <location>
        <begin position="160"/>
        <end position="204"/>
    </location>
</feature>
<feature type="repeat" description="ARM 4">
    <location>
        <begin position="205"/>
        <end position="243"/>
    </location>
</feature>
<feature type="repeat" description="ARM 5">
    <location>
        <begin position="244"/>
        <end position="288"/>
    </location>
</feature>
<feature type="repeat" description="ARM 6">
    <location>
        <begin position="289"/>
        <end position="328"/>
    </location>
</feature>
<feature type="repeat" description="ARM 7">
    <location>
        <begin position="329"/>
        <end position="370"/>
    </location>
</feature>
<feature type="repeat" description="ARM 8">
    <location>
        <begin position="371"/>
        <end position="410"/>
    </location>
</feature>
<feature type="repeat" description="ARM 9">
    <location>
        <begin position="411"/>
        <end position="453"/>
    </location>
</feature>
<feature type="repeat" description="ARM 10; atypical">
    <location>
        <begin position="457"/>
        <end position="502"/>
    </location>
</feature>
<feature type="region of interest" description="Disordered" evidence="3">
    <location>
        <begin position="1"/>
        <end position="29"/>
    </location>
</feature>
<feature type="region of interest" description="NLS binding site (major)" evidence="1">
    <location>
        <begin position="147"/>
        <end position="239"/>
    </location>
</feature>
<feature type="region of interest" description="NLS binding site (minor)" evidence="1">
    <location>
        <begin position="316"/>
        <end position="404"/>
    </location>
</feature>
<feature type="short sequence motif" description="Nuclear localization signal" evidence="1">
    <location>
        <begin position="45"/>
        <end position="54"/>
    </location>
</feature>
<feature type="modified residue" description="N-acetylmethionine" evidence="9 10 11">
    <location>
        <position position="1"/>
    </location>
</feature>
<feature type="modified residue" description="Phosphoserine" evidence="8 10 12">
    <location>
        <position position="6"/>
    </location>
</feature>
<feature type="modified residue" description="Phosphoserine" evidence="12">
    <location>
        <position position="113"/>
    </location>
</feature>
<feature type="helix" evidence="13">
    <location>
        <begin position="83"/>
        <end position="89"/>
    </location>
</feature>
<feature type="helix" evidence="13">
    <location>
        <begin position="94"/>
        <end position="108"/>
    </location>
</feature>
<feature type="strand" evidence="13">
    <location>
        <begin position="111"/>
        <end position="113"/>
    </location>
</feature>
<feature type="helix" evidence="13">
    <location>
        <begin position="116"/>
        <end position="121"/>
    </location>
</feature>
<feature type="helix" evidence="13">
    <location>
        <begin position="125"/>
        <end position="132"/>
    </location>
</feature>
<feature type="helix" evidence="13">
    <location>
        <begin position="139"/>
        <end position="152"/>
    </location>
</feature>
<feature type="helix" evidence="13">
    <location>
        <begin position="157"/>
        <end position="165"/>
    </location>
</feature>
<feature type="helix" evidence="13">
    <location>
        <begin position="168"/>
        <end position="174"/>
    </location>
</feature>
<feature type="helix" evidence="13">
    <location>
        <begin position="175"/>
        <end position="177"/>
    </location>
</feature>
<feature type="helix" evidence="13">
    <location>
        <begin position="181"/>
        <end position="195"/>
    </location>
</feature>
<feature type="helix" evidence="13">
    <location>
        <begin position="199"/>
        <end position="207"/>
    </location>
</feature>
<feature type="helix" evidence="13">
    <location>
        <begin position="211"/>
        <end position="220"/>
    </location>
</feature>
<feature type="helix" evidence="13">
    <location>
        <begin position="224"/>
        <end position="238"/>
    </location>
</feature>
<feature type="helix" evidence="13">
    <location>
        <begin position="247"/>
        <end position="249"/>
    </location>
</feature>
<feature type="helix" evidence="13">
    <location>
        <begin position="251"/>
        <end position="253"/>
    </location>
</feature>
<feature type="helix" evidence="13">
    <location>
        <begin position="254"/>
        <end position="260"/>
    </location>
</feature>
<feature type="helix" evidence="13">
    <location>
        <begin position="266"/>
        <end position="279"/>
    </location>
</feature>
<feature type="strand" evidence="13">
    <location>
        <begin position="281"/>
        <end position="283"/>
    </location>
</feature>
<feature type="helix" evidence="13">
    <location>
        <begin position="284"/>
        <end position="292"/>
    </location>
</feature>
<feature type="helix" evidence="13">
    <location>
        <begin position="296"/>
        <end position="301"/>
    </location>
</feature>
<feature type="helix" evidence="13">
    <location>
        <begin position="302"/>
        <end position="304"/>
    </location>
</feature>
<feature type="helix" evidence="13">
    <location>
        <begin position="308"/>
        <end position="321"/>
    </location>
</feature>
<feature type="helix" evidence="13">
    <location>
        <begin position="326"/>
        <end position="333"/>
    </location>
</feature>
<feature type="turn" evidence="13">
    <location>
        <begin position="334"/>
        <end position="336"/>
    </location>
</feature>
<feature type="helix" evidence="13">
    <location>
        <begin position="338"/>
        <end position="344"/>
    </location>
</feature>
<feature type="helix" evidence="13">
    <location>
        <begin position="350"/>
        <end position="363"/>
    </location>
</feature>
<feature type="helix" evidence="13">
    <location>
        <begin position="368"/>
        <end position="376"/>
    </location>
</feature>
<feature type="helix" evidence="13">
    <location>
        <begin position="380"/>
        <end position="389"/>
    </location>
</feature>
<feature type="helix" evidence="13">
    <location>
        <begin position="392"/>
        <end position="408"/>
    </location>
</feature>
<feature type="helix" evidence="13">
    <location>
        <begin position="411"/>
        <end position="419"/>
    </location>
</feature>
<feature type="helix" evidence="13">
    <location>
        <begin position="423"/>
        <end position="427"/>
    </location>
</feature>
<feature type="helix" evidence="13">
    <location>
        <begin position="428"/>
        <end position="431"/>
    </location>
</feature>
<feature type="helix" evidence="13">
    <location>
        <begin position="435"/>
        <end position="455"/>
    </location>
</feature>
<feature type="turn" evidence="13">
    <location>
        <begin position="456"/>
        <end position="459"/>
    </location>
</feature>
<feature type="helix" evidence="13">
    <location>
        <begin position="467"/>
        <end position="472"/>
    </location>
</feature>
<feature type="helix" evidence="13">
    <location>
        <begin position="475"/>
        <end position="481"/>
    </location>
</feature>
<feature type="helix" evidence="13">
    <location>
        <begin position="482"/>
        <end position="484"/>
    </location>
</feature>
<feature type="helix" evidence="13">
    <location>
        <begin position="488"/>
        <end position="501"/>
    </location>
</feature>
<accession>O60684</accession>
<accession>B2RDC7</accession>
<accession>D3DPP5</accession>
<accession>Q5VVU3</accession>
<proteinExistence type="evidence at protein level"/>
<reference key="1">
    <citation type="journal article" date="1999" name="Mol. Cell. Biol.">
        <title>Evidence for distinct substrate specificities of importin alpha family members in nuclear protein import.</title>
        <authorList>
            <person name="Koehler M."/>
            <person name="Speck C."/>
            <person name="Christiansen M."/>
            <person name="Bischoff F.R."/>
            <person name="Prehn S."/>
            <person name="Haller H."/>
            <person name="Goerlich D."/>
            <person name="Hartmann E."/>
        </authorList>
    </citation>
    <scope>NUCLEOTIDE SEQUENCE [MRNA]</scope>
    <scope>FUNCTION</scope>
    <scope>INTERACTION WITH KPNB1</scope>
    <scope>TISSUE SPECIFICITY</scope>
</reference>
<reference key="2">
    <citation type="journal article" date="2004" name="Nat. Genet.">
        <title>Complete sequencing and characterization of 21,243 full-length human cDNAs.</title>
        <authorList>
            <person name="Ota T."/>
            <person name="Suzuki Y."/>
            <person name="Nishikawa T."/>
            <person name="Otsuki T."/>
            <person name="Sugiyama T."/>
            <person name="Irie R."/>
            <person name="Wakamatsu A."/>
            <person name="Hayashi K."/>
            <person name="Sato H."/>
            <person name="Nagai K."/>
            <person name="Kimura K."/>
            <person name="Makita H."/>
            <person name="Sekine M."/>
            <person name="Obayashi M."/>
            <person name="Nishi T."/>
            <person name="Shibahara T."/>
            <person name="Tanaka T."/>
            <person name="Ishii S."/>
            <person name="Yamamoto J."/>
            <person name="Saito K."/>
            <person name="Kawai Y."/>
            <person name="Isono Y."/>
            <person name="Nakamura Y."/>
            <person name="Nagahari K."/>
            <person name="Murakami K."/>
            <person name="Yasuda T."/>
            <person name="Iwayanagi T."/>
            <person name="Wagatsuma M."/>
            <person name="Shiratori A."/>
            <person name="Sudo H."/>
            <person name="Hosoiri T."/>
            <person name="Kaku Y."/>
            <person name="Kodaira H."/>
            <person name="Kondo H."/>
            <person name="Sugawara M."/>
            <person name="Takahashi M."/>
            <person name="Kanda K."/>
            <person name="Yokoi T."/>
            <person name="Furuya T."/>
            <person name="Kikkawa E."/>
            <person name="Omura Y."/>
            <person name="Abe K."/>
            <person name="Kamihara K."/>
            <person name="Katsuta N."/>
            <person name="Sato K."/>
            <person name="Tanikawa M."/>
            <person name="Yamazaki M."/>
            <person name="Ninomiya K."/>
            <person name="Ishibashi T."/>
            <person name="Yamashita H."/>
            <person name="Murakawa K."/>
            <person name="Fujimori K."/>
            <person name="Tanai H."/>
            <person name="Kimata M."/>
            <person name="Watanabe M."/>
            <person name="Hiraoka S."/>
            <person name="Chiba Y."/>
            <person name="Ishida S."/>
            <person name="Ono Y."/>
            <person name="Takiguchi S."/>
            <person name="Watanabe S."/>
            <person name="Yosida M."/>
            <person name="Hotuta T."/>
            <person name="Kusano J."/>
            <person name="Kanehori K."/>
            <person name="Takahashi-Fujii A."/>
            <person name="Hara H."/>
            <person name="Tanase T.-O."/>
            <person name="Nomura Y."/>
            <person name="Togiya S."/>
            <person name="Komai F."/>
            <person name="Hara R."/>
            <person name="Takeuchi K."/>
            <person name="Arita M."/>
            <person name="Imose N."/>
            <person name="Musashino K."/>
            <person name="Yuuki H."/>
            <person name="Oshima A."/>
            <person name="Sasaki N."/>
            <person name="Aotsuka S."/>
            <person name="Yoshikawa Y."/>
            <person name="Matsunawa H."/>
            <person name="Ichihara T."/>
            <person name="Shiohata N."/>
            <person name="Sano S."/>
            <person name="Moriya S."/>
            <person name="Momiyama H."/>
            <person name="Satoh N."/>
            <person name="Takami S."/>
            <person name="Terashima Y."/>
            <person name="Suzuki O."/>
            <person name="Nakagawa S."/>
            <person name="Senoh A."/>
            <person name="Mizoguchi H."/>
            <person name="Goto Y."/>
            <person name="Shimizu F."/>
            <person name="Wakebe H."/>
            <person name="Hishigaki H."/>
            <person name="Watanabe T."/>
            <person name="Sugiyama A."/>
            <person name="Takemoto M."/>
            <person name="Kawakami B."/>
            <person name="Yamazaki M."/>
            <person name="Watanabe K."/>
            <person name="Kumagai A."/>
            <person name="Itakura S."/>
            <person name="Fukuzumi Y."/>
            <person name="Fujimori Y."/>
            <person name="Komiyama M."/>
            <person name="Tashiro H."/>
            <person name="Tanigami A."/>
            <person name="Fujiwara T."/>
            <person name="Ono T."/>
            <person name="Yamada K."/>
            <person name="Fujii Y."/>
            <person name="Ozaki K."/>
            <person name="Hirao M."/>
            <person name="Ohmori Y."/>
            <person name="Kawabata A."/>
            <person name="Hikiji T."/>
            <person name="Kobatake N."/>
            <person name="Inagaki H."/>
            <person name="Ikema Y."/>
            <person name="Okamoto S."/>
            <person name="Okitani R."/>
            <person name="Kawakami T."/>
            <person name="Noguchi S."/>
            <person name="Itoh T."/>
            <person name="Shigeta K."/>
            <person name="Senba T."/>
            <person name="Matsumura K."/>
            <person name="Nakajima Y."/>
            <person name="Mizuno T."/>
            <person name="Morinaga M."/>
            <person name="Sasaki M."/>
            <person name="Togashi T."/>
            <person name="Oyama M."/>
            <person name="Hata H."/>
            <person name="Watanabe M."/>
            <person name="Komatsu T."/>
            <person name="Mizushima-Sugano J."/>
            <person name="Satoh T."/>
            <person name="Shirai Y."/>
            <person name="Takahashi Y."/>
            <person name="Nakagawa K."/>
            <person name="Okumura K."/>
            <person name="Nagase T."/>
            <person name="Nomura N."/>
            <person name="Kikuchi H."/>
            <person name="Masuho Y."/>
            <person name="Yamashita R."/>
            <person name="Nakai K."/>
            <person name="Yada T."/>
            <person name="Nakamura Y."/>
            <person name="Ohara O."/>
            <person name="Isogai T."/>
            <person name="Sugano S."/>
        </authorList>
    </citation>
    <scope>NUCLEOTIDE SEQUENCE [LARGE SCALE MRNA]</scope>
</reference>
<reference key="3">
    <citation type="submission" date="2003-08" db="EMBL/GenBank/DDBJ databases">
        <title>Cloning of human full-length CDSs in BD Creator(TM) system donor vector.</title>
        <authorList>
            <person name="Kalnine N."/>
            <person name="Chen X."/>
            <person name="Rolfs A."/>
            <person name="Halleck A."/>
            <person name="Hines L."/>
            <person name="Eisenstein S."/>
            <person name="Koundinya M."/>
            <person name="Raphael J."/>
            <person name="Moreira D."/>
            <person name="Kelley T."/>
            <person name="LaBaer J."/>
            <person name="Lin Y."/>
            <person name="Phelan M."/>
            <person name="Farmer A."/>
        </authorList>
    </citation>
    <scope>NUCLEOTIDE SEQUENCE [LARGE SCALE MRNA]</scope>
</reference>
<reference key="4">
    <citation type="journal article" date="2006" name="Nature">
        <title>The DNA sequence and biological annotation of human chromosome 1.</title>
        <authorList>
            <person name="Gregory S.G."/>
            <person name="Barlow K.F."/>
            <person name="McLay K.E."/>
            <person name="Kaul R."/>
            <person name="Swarbreck D."/>
            <person name="Dunham A."/>
            <person name="Scott C.E."/>
            <person name="Howe K.L."/>
            <person name="Woodfine K."/>
            <person name="Spencer C.C.A."/>
            <person name="Jones M.C."/>
            <person name="Gillson C."/>
            <person name="Searle S."/>
            <person name="Zhou Y."/>
            <person name="Kokocinski F."/>
            <person name="McDonald L."/>
            <person name="Evans R."/>
            <person name="Phillips K."/>
            <person name="Atkinson A."/>
            <person name="Cooper R."/>
            <person name="Jones C."/>
            <person name="Hall R.E."/>
            <person name="Andrews T.D."/>
            <person name="Lloyd C."/>
            <person name="Ainscough R."/>
            <person name="Almeida J.P."/>
            <person name="Ambrose K.D."/>
            <person name="Anderson F."/>
            <person name="Andrew R.W."/>
            <person name="Ashwell R.I.S."/>
            <person name="Aubin K."/>
            <person name="Babbage A.K."/>
            <person name="Bagguley C.L."/>
            <person name="Bailey J."/>
            <person name="Beasley H."/>
            <person name="Bethel G."/>
            <person name="Bird C.P."/>
            <person name="Bray-Allen S."/>
            <person name="Brown J.Y."/>
            <person name="Brown A.J."/>
            <person name="Buckley D."/>
            <person name="Burton J."/>
            <person name="Bye J."/>
            <person name="Carder C."/>
            <person name="Chapman J.C."/>
            <person name="Clark S.Y."/>
            <person name="Clarke G."/>
            <person name="Clee C."/>
            <person name="Cobley V."/>
            <person name="Collier R.E."/>
            <person name="Corby N."/>
            <person name="Coville G.J."/>
            <person name="Davies J."/>
            <person name="Deadman R."/>
            <person name="Dunn M."/>
            <person name="Earthrowl M."/>
            <person name="Ellington A.G."/>
            <person name="Errington H."/>
            <person name="Frankish A."/>
            <person name="Frankland J."/>
            <person name="French L."/>
            <person name="Garner P."/>
            <person name="Garnett J."/>
            <person name="Gay L."/>
            <person name="Ghori M.R.J."/>
            <person name="Gibson R."/>
            <person name="Gilby L.M."/>
            <person name="Gillett W."/>
            <person name="Glithero R.J."/>
            <person name="Grafham D.V."/>
            <person name="Griffiths C."/>
            <person name="Griffiths-Jones S."/>
            <person name="Grocock R."/>
            <person name="Hammond S."/>
            <person name="Harrison E.S.I."/>
            <person name="Hart E."/>
            <person name="Haugen E."/>
            <person name="Heath P.D."/>
            <person name="Holmes S."/>
            <person name="Holt K."/>
            <person name="Howden P.J."/>
            <person name="Hunt A.R."/>
            <person name="Hunt S.E."/>
            <person name="Hunter G."/>
            <person name="Isherwood J."/>
            <person name="James R."/>
            <person name="Johnson C."/>
            <person name="Johnson D."/>
            <person name="Joy A."/>
            <person name="Kay M."/>
            <person name="Kershaw J.K."/>
            <person name="Kibukawa M."/>
            <person name="Kimberley A.M."/>
            <person name="King A."/>
            <person name="Knights A.J."/>
            <person name="Lad H."/>
            <person name="Laird G."/>
            <person name="Lawlor S."/>
            <person name="Leongamornlert D.A."/>
            <person name="Lloyd D.M."/>
            <person name="Loveland J."/>
            <person name="Lovell J."/>
            <person name="Lush M.J."/>
            <person name="Lyne R."/>
            <person name="Martin S."/>
            <person name="Mashreghi-Mohammadi M."/>
            <person name="Matthews L."/>
            <person name="Matthews N.S.W."/>
            <person name="McLaren S."/>
            <person name="Milne S."/>
            <person name="Mistry S."/>
            <person name="Moore M.J.F."/>
            <person name="Nickerson T."/>
            <person name="O'Dell C.N."/>
            <person name="Oliver K."/>
            <person name="Palmeiri A."/>
            <person name="Palmer S.A."/>
            <person name="Parker A."/>
            <person name="Patel D."/>
            <person name="Pearce A.V."/>
            <person name="Peck A.I."/>
            <person name="Pelan S."/>
            <person name="Phelps K."/>
            <person name="Phillimore B.J."/>
            <person name="Plumb R."/>
            <person name="Rajan J."/>
            <person name="Raymond C."/>
            <person name="Rouse G."/>
            <person name="Saenphimmachak C."/>
            <person name="Sehra H.K."/>
            <person name="Sheridan E."/>
            <person name="Shownkeen R."/>
            <person name="Sims S."/>
            <person name="Skuce C.D."/>
            <person name="Smith M."/>
            <person name="Steward C."/>
            <person name="Subramanian S."/>
            <person name="Sycamore N."/>
            <person name="Tracey A."/>
            <person name="Tromans A."/>
            <person name="Van Helmond Z."/>
            <person name="Wall M."/>
            <person name="Wallis J.M."/>
            <person name="White S."/>
            <person name="Whitehead S.L."/>
            <person name="Wilkinson J.E."/>
            <person name="Willey D.L."/>
            <person name="Williams H."/>
            <person name="Wilming L."/>
            <person name="Wray P.W."/>
            <person name="Wu Z."/>
            <person name="Coulson A."/>
            <person name="Vaudin M."/>
            <person name="Sulston J.E."/>
            <person name="Durbin R.M."/>
            <person name="Hubbard T."/>
            <person name="Wooster R."/>
            <person name="Dunham I."/>
            <person name="Carter N.P."/>
            <person name="McVean G."/>
            <person name="Ross M.T."/>
            <person name="Harrow J."/>
            <person name="Olson M.V."/>
            <person name="Beck S."/>
            <person name="Rogers J."/>
            <person name="Bentley D.R."/>
        </authorList>
    </citation>
    <scope>NUCLEOTIDE SEQUENCE [LARGE SCALE GENOMIC DNA]</scope>
</reference>
<reference key="5">
    <citation type="submission" date="2005-09" db="EMBL/GenBank/DDBJ databases">
        <authorList>
            <person name="Mural R.J."/>
            <person name="Istrail S."/>
            <person name="Sutton G.G."/>
            <person name="Florea L."/>
            <person name="Halpern A.L."/>
            <person name="Mobarry C.M."/>
            <person name="Lippert R."/>
            <person name="Walenz B."/>
            <person name="Shatkay H."/>
            <person name="Dew I."/>
            <person name="Miller J.R."/>
            <person name="Flanigan M.J."/>
            <person name="Edwards N.J."/>
            <person name="Bolanos R."/>
            <person name="Fasulo D."/>
            <person name="Halldorsson B.V."/>
            <person name="Hannenhalli S."/>
            <person name="Turner R."/>
            <person name="Yooseph S."/>
            <person name="Lu F."/>
            <person name="Nusskern D.R."/>
            <person name="Shue B.C."/>
            <person name="Zheng X.H."/>
            <person name="Zhong F."/>
            <person name="Delcher A.L."/>
            <person name="Huson D.H."/>
            <person name="Kravitz S.A."/>
            <person name="Mouchard L."/>
            <person name="Reinert K."/>
            <person name="Remington K.A."/>
            <person name="Clark A.G."/>
            <person name="Waterman M.S."/>
            <person name="Eichler E.E."/>
            <person name="Adams M.D."/>
            <person name="Hunkapiller M.W."/>
            <person name="Myers E.W."/>
            <person name="Venter J.C."/>
        </authorList>
    </citation>
    <scope>NUCLEOTIDE SEQUENCE [LARGE SCALE GENOMIC DNA]</scope>
</reference>
<reference key="6">
    <citation type="journal article" date="2004" name="Genome Res.">
        <title>The status, quality, and expansion of the NIH full-length cDNA project: the Mammalian Gene Collection (MGC).</title>
        <authorList>
            <consortium name="The MGC Project Team"/>
        </authorList>
    </citation>
    <scope>NUCLEOTIDE SEQUENCE [LARGE SCALE MRNA]</scope>
    <source>
        <tissue>Uterus</tissue>
    </source>
</reference>
<reference key="7">
    <citation type="journal article" date="2007" name="J. Virol.">
        <title>Ebola virus VP24 proteins inhibit the interaction of NPI-1 subfamily karyopherin alpha proteins with activated STAT1.</title>
        <authorList>
            <person name="Reid S.P."/>
            <person name="Valmas C."/>
            <person name="Martinez O."/>
            <person name="Sanchez F.M."/>
            <person name="Basler C.F."/>
        </authorList>
    </citation>
    <scope>INTERACTION WITH EBOLAVIRUS VP24 (MICROBIAL INFECTION)</scope>
</reference>
<reference key="8">
    <citation type="journal article" date="2008" name="Mol. Cell">
        <title>Kinase-selective enrichment enables quantitative phosphoproteomics of the kinome across the cell cycle.</title>
        <authorList>
            <person name="Daub H."/>
            <person name="Olsen J.V."/>
            <person name="Bairlein M."/>
            <person name="Gnad F."/>
            <person name="Oppermann F.S."/>
            <person name="Korner R."/>
            <person name="Greff Z."/>
            <person name="Keri G."/>
            <person name="Stemmann O."/>
            <person name="Mann M."/>
        </authorList>
    </citation>
    <scope>PHOSPHORYLATION [LARGE SCALE ANALYSIS] AT SER-6</scope>
    <scope>IDENTIFICATION BY MASS SPECTROMETRY [LARGE SCALE ANALYSIS]</scope>
    <source>
        <tissue>Cervix carcinoma</tissue>
    </source>
</reference>
<reference key="9">
    <citation type="journal article" date="2009" name="Anal. Chem.">
        <title>Lys-N and trypsin cover complementary parts of the phosphoproteome in a refined SCX-based approach.</title>
        <authorList>
            <person name="Gauci S."/>
            <person name="Helbig A.O."/>
            <person name="Slijper M."/>
            <person name="Krijgsveld J."/>
            <person name="Heck A.J."/>
            <person name="Mohammed S."/>
        </authorList>
    </citation>
    <scope>ACETYLATION [LARGE SCALE ANALYSIS] AT MET-1</scope>
    <scope>IDENTIFICATION BY MASS SPECTROMETRY [LARGE SCALE ANALYSIS]</scope>
</reference>
<reference key="10">
    <citation type="journal article" date="2010" name="Sci. Signal.">
        <title>Quantitative phosphoproteomics reveals widespread full phosphorylation site occupancy during mitosis.</title>
        <authorList>
            <person name="Olsen J.V."/>
            <person name="Vermeulen M."/>
            <person name="Santamaria A."/>
            <person name="Kumar C."/>
            <person name="Miller M.L."/>
            <person name="Jensen L.J."/>
            <person name="Gnad F."/>
            <person name="Cox J."/>
            <person name="Jensen T.S."/>
            <person name="Nigg E.A."/>
            <person name="Brunak S."/>
            <person name="Mann M."/>
        </authorList>
    </citation>
    <scope>ACETYLATION [LARGE SCALE ANALYSIS] AT MET-1</scope>
    <scope>PHOSPHORYLATION [LARGE SCALE ANALYSIS] AT SER-6</scope>
    <scope>IDENTIFICATION BY MASS SPECTROMETRY [LARGE SCALE ANALYSIS]</scope>
    <source>
        <tissue>Cervix carcinoma</tissue>
    </source>
</reference>
<reference key="11">
    <citation type="journal article" date="2011" name="BMC Syst. Biol.">
        <title>Initial characterization of the human central proteome.</title>
        <authorList>
            <person name="Burkard T.R."/>
            <person name="Planyavsky M."/>
            <person name="Kaupe I."/>
            <person name="Breitwieser F.P."/>
            <person name="Buerckstuemmer T."/>
            <person name="Bennett K.L."/>
            <person name="Superti-Furga G."/>
            <person name="Colinge J."/>
        </authorList>
    </citation>
    <scope>IDENTIFICATION BY MASS SPECTROMETRY [LARGE SCALE ANALYSIS]</scope>
</reference>
<reference key="12">
    <citation type="journal article" date="2012" name="Proc. Natl. Acad. Sci. U.S.A.">
        <title>N-terminal acetylome analyses and functional insights of the N-terminal acetyltransferase NatB.</title>
        <authorList>
            <person name="Van Damme P."/>
            <person name="Lasa M."/>
            <person name="Polevoda B."/>
            <person name="Gazquez C."/>
            <person name="Elosegui-Artola A."/>
            <person name="Kim D.S."/>
            <person name="De Juan-Pardo E."/>
            <person name="Demeyer K."/>
            <person name="Hole K."/>
            <person name="Larrea E."/>
            <person name="Timmerman E."/>
            <person name="Prieto J."/>
            <person name="Arnesen T."/>
            <person name="Sherman F."/>
            <person name="Gevaert K."/>
            <person name="Aldabe R."/>
        </authorList>
    </citation>
    <scope>ACETYLATION [LARGE SCALE ANALYSIS] AT MET-1</scope>
    <scope>IDENTIFICATION BY MASS SPECTROMETRY [LARGE SCALE ANALYSIS]</scope>
</reference>
<reference key="13">
    <citation type="journal article" date="2013" name="J. Proteome Res.">
        <title>Toward a comprehensive characterization of a human cancer cell phosphoproteome.</title>
        <authorList>
            <person name="Zhou H."/>
            <person name="Di Palma S."/>
            <person name="Preisinger C."/>
            <person name="Peng M."/>
            <person name="Polat A.N."/>
            <person name="Heck A.J."/>
            <person name="Mohammed S."/>
        </authorList>
    </citation>
    <scope>PHOSPHORYLATION [LARGE SCALE ANALYSIS] AT SER-6 AND SER-113</scope>
    <scope>IDENTIFICATION BY MASS SPECTROMETRY [LARGE SCALE ANALYSIS]</scope>
    <source>
        <tissue>Cervix carcinoma</tissue>
        <tissue>Erythroleukemia</tissue>
    </source>
</reference>
<reference key="14">
    <citation type="journal article" date="2014" name="J. Proteomics">
        <title>An enzyme assisted RP-RPLC approach for in-depth analysis of human liver phosphoproteome.</title>
        <authorList>
            <person name="Bian Y."/>
            <person name="Song C."/>
            <person name="Cheng K."/>
            <person name="Dong M."/>
            <person name="Wang F."/>
            <person name="Huang J."/>
            <person name="Sun D."/>
            <person name="Wang L."/>
            <person name="Ye M."/>
            <person name="Zou H."/>
        </authorList>
    </citation>
    <scope>IDENTIFICATION BY MASS SPECTROMETRY [LARGE SCALE ANALYSIS]</scope>
    <source>
        <tissue>Liver</tissue>
    </source>
</reference>
<reference key="15">
    <citation type="journal article" date="2019" name="Virology">
        <title>Nucleocytoplasmic shuttling of the human parainfluenza virus type 2 phosphoprotein.</title>
        <authorList>
            <person name="Ohtsuka J."/>
            <person name="Matsumoto Y."/>
            <person name="Ohta K."/>
            <person name="Fukumura M."/>
            <person name="Tsurudome M."/>
            <person name="Nosaka T."/>
            <person name="Nishio M."/>
        </authorList>
    </citation>
    <scope>INTERACTION WITH HPIV-2 VIRUS PROTEINS P AND V (MICROBIAL INFECTION)</scope>
</reference>
<keyword id="KW-0002">3D-structure</keyword>
<keyword id="KW-0007">Acetylation</keyword>
<keyword id="KW-0945">Host-virus interaction</keyword>
<keyword id="KW-0597">Phosphoprotein</keyword>
<keyword id="KW-0653">Protein transport</keyword>
<keyword id="KW-1267">Proteomics identification</keyword>
<keyword id="KW-1185">Reference proteome</keyword>
<keyword id="KW-0677">Repeat</keyword>
<keyword id="KW-0813">Transport</keyword>
<protein>
    <recommendedName>
        <fullName>Importin subunit alpha-7</fullName>
    </recommendedName>
    <alternativeName>
        <fullName>Karyopherin subunit alpha-6</fullName>
    </alternativeName>
</protein>
<organism>
    <name type="scientific">Homo sapiens</name>
    <name type="common">Human</name>
    <dbReference type="NCBI Taxonomy" id="9606"/>
    <lineage>
        <taxon>Eukaryota</taxon>
        <taxon>Metazoa</taxon>
        <taxon>Chordata</taxon>
        <taxon>Craniata</taxon>
        <taxon>Vertebrata</taxon>
        <taxon>Euteleostomi</taxon>
        <taxon>Mammalia</taxon>
        <taxon>Eutheria</taxon>
        <taxon>Euarchontoglires</taxon>
        <taxon>Primates</taxon>
        <taxon>Haplorrhini</taxon>
        <taxon>Catarrhini</taxon>
        <taxon>Hominidae</taxon>
        <taxon>Homo</taxon>
    </lineage>
</organism>
<sequence length="536" mass="60030">METMASPGKDNYRMKSYKNNALNPEEMRRRREEEGIQLRKQKREQQLFKRRNVELINEEAAMFDSLLMDSYVSSTTGESVITREMVEMLFSDDSDLQLATTQKFRKLLSKEPSPPIDEVINTPRVVDRFVEFLKRNENCTLQFEAAWALTNIASGTSQQTKIVIEAGAVPIFIELLNSDFEDVQEQAVWALGNIAGDSSVCRDYVLNCSILNPLLTLLTKSTRLTMTRNAVWALSNLCRGKNPPPEFAKVSPCLPVLSRLLFSSDSDLLADACWALSYLSDGPNEKIQAVIDSGVCRRLVELLMHNDYKVASPALRAVGNIVTGDDIQTQVILNCSALPCLLHLLSSPKESIRKEACWTISNITAGNRAQIQAVIDANIFPVLIEILQKAEFRTRKEAAWAITNATSGGTPEQIRYLVSLGCIKPLCDLLTVMDSKIVQVALNGLENILRLGEQEGKRSGSGVNPYCGLIEEAYGLDKIEFLQSHENQEIYQKAFDLIEHYFGVEDDDSSLAPQVDETQQQFIFQQPEAPMEGFQL</sequence>
<dbReference type="EMBL" id="AF060543">
    <property type="protein sequence ID" value="AAC15233.1"/>
    <property type="molecule type" value="mRNA"/>
</dbReference>
<dbReference type="EMBL" id="AK315490">
    <property type="protein sequence ID" value="BAG37874.1"/>
    <property type="molecule type" value="mRNA"/>
</dbReference>
<dbReference type="EMBL" id="BT009843">
    <property type="protein sequence ID" value="AAP88845.1"/>
    <property type="molecule type" value="mRNA"/>
</dbReference>
<dbReference type="EMBL" id="AL445248">
    <property type="status" value="NOT_ANNOTATED_CDS"/>
    <property type="molecule type" value="Genomic_DNA"/>
</dbReference>
<dbReference type="EMBL" id="AL049795">
    <property type="status" value="NOT_ANNOTATED_CDS"/>
    <property type="molecule type" value="Genomic_DNA"/>
</dbReference>
<dbReference type="EMBL" id="CH471059">
    <property type="protein sequence ID" value="EAX07567.1"/>
    <property type="molecule type" value="Genomic_DNA"/>
</dbReference>
<dbReference type="EMBL" id="CH471059">
    <property type="protein sequence ID" value="EAX07568.1"/>
    <property type="molecule type" value="Genomic_DNA"/>
</dbReference>
<dbReference type="EMBL" id="BC020520">
    <property type="protein sequence ID" value="AAH20520.1"/>
    <property type="molecule type" value="mRNA"/>
</dbReference>
<dbReference type="CCDS" id="CCDS352.1"/>
<dbReference type="RefSeq" id="NP_036448.1">
    <property type="nucleotide sequence ID" value="NM_012316.5"/>
</dbReference>
<dbReference type="PDB" id="4UAD">
    <property type="method" value="X-ray"/>
    <property type="resolution" value="2.42 A"/>
    <property type="chains" value="A=59-536"/>
</dbReference>
<dbReference type="PDB" id="7RHT">
    <property type="method" value="X-ray"/>
    <property type="resolution" value="2.50 A"/>
    <property type="chains" value="A=59-536"/>
</dbReference>
<dbReference type="PDBsum" id="4UAD"/>
<dbReference type="PDBsum" id="7RHT"/>
<dbReference type="SMR" id="O60684"/>
<dbReference type="BioGRID" id="117163">
    <property type="interactions" value="190"/>
</dbReference>
<dbReference type="ComplexPortal" id="CPX-1064">
    <property type="entry name" value="Importin complex, KPNA6 variant"/>
</dbReference>
<dbReference type="CORUM" id="O60684"/>
<dbReference type="DIP" id="DIP-27609N"/>
<dbReference type="ELM" id="O60684"/>
<dbReference type="FunCoup" id="O60684">
    <property type="interactions" value="3297"/>
</dbReference>
<dbReference type="IntAct" id="O60684">
    <property type="interactions" value="111"/>
</dbReference>
<dbReference type="MINT" id="O60684"/>
<dbReference type="STRING" id="9606.ENSP00000362728"/>
<dbReference type="TCDB" id="1.I.1.1.3">
    <property type="family name" value="the nuclear pore complex (npc) family"/>
</dbReference>
<dbReference type="GlyGen" id="O60684">
    <property type="glycosylation" value="1 site, 1 O-linked glycan (1 site)"/>
</dbReference>
<dbReference type="iPTMnet" id="O60684"/>
<dbReference type="MetOSite" id="O60684"/>
<dbReference type="PhosphoSitePlus" id="O60684"/>
<dbReference type="SwissPalm" id="O60684"/>
<dbReference type="BioMuta" id="KPNA6"/>
<dbReference type="jPOST" id="O60684"/>
<dbReference type="MassIVE" id="O60684"/>
<dbReference type="PaxDb" id="9606-ENSP00000362728"/>
<dbReference type="PeptideAtlas" id="O60684"/>
<dbReference type="ProteomicsDB" id="49527"/>
<dbReference type="Pumba" id="O60684"/>
<dbReference type="Antibodypedia" id="16877">
    <property type="antibodies" value="175 antibodies from 33 providers"/>
</dbReference>
<dbReference type="DNASU" id="23633"/>
<dbReference type="Ensembl" id="ENST00000373625.8">
    <property type="protein sequence ID" value="ENSP00000362728.3"/>
    <property type="gene ID" value="ENSG00000025800.14"/>
</dbReference>
<dbReference type="GeneID" id="23633"/>
<dbReference type="KEGG" id="hsa:23633"/>
<dbReference type="MANE-Select" id="ENST00000373625.8">
    <property type="protein sequence ID" value="ENSP00000362728.3"/>
    <property type="RefSeq nucleotide sequence ID" value="NM_012316.5"/>
    <property type="RefSeq protein sequence ID" value="NP_036448.1"/>
</dbReference>
<dbReference type="UCSC" id="uc001bug.4">
    <property type="organism name" value="human"/>
</dbReference>
<dbReference type="AGR" id="HGNC:6399"/>
<dbReference type="CTD" id="23633"/>
<dbReference type="DisGeNET" id="23633"/>
<dbReference type="GeneCards" id="KPNA6"/>
<dbReference type="HGNC" id="HGNC:6399">
    <property type="gene designation" value="KPNA6"/>
</dbReference>
<dbReference type="HPA" id="ENSG00000025800">
    <property type="expression patterns" value="Low tissue specificity"/>
</dbReference>
<dbReference type="MIM" id="610563">
    <property type="type" value="gene"/>
</dbReference>
<dbReference type="neXtProt" id="NX_O60684"/>
<dbReference type="OpenTargets" id="ENSG00000025800"/>
<dbReference type="PharmGKB" id="PA30190"/>
<dbReference type="VEuPathDB" id="HostDB:ENSG00000025800"/>
<dbReference type="eggNOG" id="KOG0166">
    <property type="taxonomic scope" value="Eukaryota"/>
</dbReference>
<dbReference type="GeneTree" id="ENSGT01050000244950"/>
<dbReference type="HOGENOM" id="CLU_018084_6_0_1"/>
<dbReference type="InParanoid" id="O60684"/>
<dbReference type="OMA" id="EMIQMLY"/>
<dbReference type="OrthoDB" id="29145at2759"/>
<dbReference type="PAN-GO" id="O60684">
    <property type="GO annotations" value="5 GO annotations based on evolutionary models"/>
</dbReference>
<dbReference type="PhylomeDB" id="O60684"/>
<dbReference type="TreeFam" id="TF354205"/>
<dbReference type="PathwayCommons" id="O60684"/>
<dbReference type="Reactome" id="R-HSA-68616">
    <property type="pathway name" value="Assembly of the ORC complex at the origin of replication"/>
</dbReference>
<dbReference type="SignaLink" id="O60684"/>
<dbReference type="SIGNOR" id="O60684"/>
<dbReference type="BioGRID-ORCS" id="23633">
    <property type="hits" value="120 hits in 1170 CRISPR screens"/>
</dbReference>
<dbReference type="CD-CODE" id="DEE660B4">
    <property type="entry name" value="Stress granule"/>
</dbReference>
<dbReference type="ChiTaRS" id="KPNA6">
    <property type="organism name" value="human"/>
</dbReference>
<dbReference type="EvolutionaryTrace" id="O60684"/>
<dbReference type="GeneWiki" id="KPNA6"/>
<dbReference type="GenomeRNAi" id="23633"/>
<dbReference type="Pharos" id="O60684">
    <property type="development level" value="Tbio"/>
</dbReference>
<dbReference type="PRO" id="PR:O60684"/>
<dbReference type="Proteomes" id="UP000005640">
    <property type="component" value="Chromosome 1"/>
</dbReference>
<dbReference type="RNAct" id="O60684">
    <property type="molecule type" value="protein"/>
</dbReference>
<dbReference type="Bgee" id="ENSG00000025800">
    <property type="expression patterns" value="Expressed in buccal mucosa cell and 218 other cell types or tissues"/>
</dbReference>
<dbReference type="ExpressionAtlas" id="O60684">
    <property type="expression patterns" value="baseline and differential"/>
</dbReference>
<dbReference type="GO" id="GO:0005829">
    <property type="term" value="C:cytosol"/>
    <property type="evidence" value="ECO:0000304"/>
    <property type="project" value="Reactome"/>
</dbReference>
<dbReference type="GO" id="GO:0043657">
    <property type="term" value="C:host cell"/>
    <property type="evidence" value="ECO:0007669"/>
    <property type="project" value="GOC"/>
</dbReference>
<dbReference type="GO" id="GO:0016020">
    <property type="term" value="C:membrane"/>
    <property type="evidence" value="ECO:0007005"/>
    <property type="project" value="UniProtKB"/>
</dbReference>
<dbReference type="GO" id="GO:0042564">
    <property type="term" value="C:NLS-dependent protein nuclear import complex"/>
    <property type="evidence" value="ECO:0000353"/>
    <property type="project" value="ComplexPortal"/>
</dbReference>
<dbReference type="GO" id="GO:0005654">
    <property type="term" value="C:nucleoplasm"/>
    <property type="evidence" value="ECO:0000318"/>
    <property type="project" value="GO_Central"/>
</dbReference>
<dbReference type="GO" id="GO:0005634">
    <property type="term" value="C:nucleus"/>
    <property type="evidence" value="ECO:0000318"/>
    <property type="project" value="GO_Central"/>
</dbReference>
<dbReference type="GO" id="GO:0061608">
    <property type="term" value="F:nuclear import signal receptor activity"/>
    <property type="evidence" value="ECO:0000318"/>
    <property type="project" value="GO_Central"/>
</dbReference>
<dbReference type="GO" id="GO:0008139">
    <property type="term" value="F:nuclear localization sequence binding"/>
    <property type="evidence" value="ECO:0000318"/>
    <property type="project" value="GO_Central"/>
</dbReference>
<dbReference type="GO" id="GO:0075506">
    <property type="term" value="P:entry of viral genome into host nucleus through nuclear pore complex via importin"/>
    <property type="evidence" value="ECO:0000315"/>
    <property type="project" value="MGI"/>
</dbReference>
<dbReference type="GO" id="GO:0060135">
    <property type="term" value="P:maternal process involved in female pregnancy"/>
    <property type="evidence" value="ECO:0007669"/>
    <property type="project" value="Ensembl"/>
</dbReference>
<dbReference type="GO" id="GO:0006607">
    <property type="term" value="P:NLS-bearing protein import into nucleus"/>
    <property type="evidence" value="ECO:0000318"/>
    <property type="project" value="GO_Central"/>
</dbReference>
<dbReference type="GO" id="GO:1900017">
    <property type="term" value="P:positive regulation of cytokine production involved in inflammatory response"/>
    <property type="evidence" value="ECO:0007669"/>
    <property type="project" value="Ensembl"/>
</dbReference>
<dbReference type="GO" id="GO:0045944">
    <property type="term" value="P:positive regulation of transcription by RNA polymerase II"/>
    <property type="evidence" value="ECO:0007669"/>
    <property type="project" value="Ensembl"/>
</dbReference>
<dbReference type="GO" id="GO:1903902">
    <property type="term" value="P:positive regulation of viral life cycle"/>
    <property type="evidence" value="ECO:0000315"/>
    <property type="project" value="MGI"/>
</dbReference>
<dbReference type="GO" id="GO:0006606">
    <property type="term" value="P:protein import into nucleus"/>
    <property type="evidence" value="ECO:0000250"/>
    <property type="project" value="ComplexPortal"/>
</dbReference>
<dbReference type="GO" id="GO:0006366">
    <property type="term" value="P:transcription by RNA polymerase II"/>
    <property type="evidence" value="ECO:0007669"/>
    <property type="project" value="Ensembl"/>
</dbReference>
<dbReference type="GO" id="GO:0019079">
    <property type="term" value="P:viral genome replication"/>
    <property type="evidence" value="ECO:0007669"/>
    <property type="project" value="Ensembl"/>
</dbReference>
<dbReference type="FunFam" id="1.20.5.690:FF:000001">
    <property type="entry name" value="Importin subunit alpha"/>
    <property type="match status" value="1"/>
</dbReference>
<dbReference type="FunFam" id="1.25.10.10:FF:000013">
    <property type="entry name" value="Importin subunit alpha"/>
    <property type="match status" value="1"/>
</dbReference>
<dbReference type="Gene3D" id="1.20.5.690">
    <property type="entry name" value="Importin-alpha, importin-beta-binding domain"/>
    <property type="match status" value="1"/>
</dbReference>
<dbReference type="Gene3D" id="1.25.10.10">
    <property type="entry name" value="Leucine-rich Repeat Variant"/>
    <property type="match status" value="1"/>
</dbReference>
<dbReference type="InterPro" id="IPR011989">
    <property type="entry name" value="ARM-like"/>
</dbReference>
<dbReference type="InterPro" id="IPR016024">
    <property type="entry name" value="ARM-type_fold"/>
</dbReference>
<dbReference type="InterPro" id="IPR032413">
    <property type="entry name" value="Arm_3"/>
</dbReference>
<dbReference type="InterPro" id="IPR000225">
    <property type="entry name" value="Armadillo"/>
</dbReference>
<dbReference type="InterPro" id="IPR002652">
    <property type="entry name" value="Importin-a_IBB"/>
</dbReference>
<dbReference type="InterPro" id="IPR036975">
    <property type="entry name" value="Importin-a_IBB_sf"/>
</dbReference>
<dbReference type="InterPro" id="IPR024931">
    <property type="entry name" value="Importin_alpha"/>
</dbReference>
<dbReference type="PANTHER" id="PTHR23316">
    <property type="entry name" value="IMPORTIN ALPHA"/>
    <property type="match status" value="1"/>
</dbReference>
<dbReference type="Pfam" id="PF00514">
    <property type="entry name" value="Arm"/>
    <property type="match status" value="8"/>
</dbReference>
<dbReference type="Pfam" id="PF16186">
    <property type="entry name" value="Arm_3"/>
    <property type="match status" value="1"/>
</dbReference>
<dbReference type="Pfam" id="PF01749">
    <property type="entry name" value="IBB"/>
    <property type="match status" value="1"/>
</dbReference>
<dbReference type="PIRSF" id="PIRSF005673">
    <property type="entry name" value="Importin_alpha"/>
    <property type="match status" value="1"/>
</dbReference>
<dbReference type="SMART" id="SM00185">
    <property type="entry name" value="ARM"/>
    <property type="match status" value="8"/>
</dbReference>
<dbReference type="SUPFAM" id="SSF48371">
    <property type="entry name" value="ARM repeat"/>
    <property type="match status" value="1"/>
</dbReference>
<dbReference type="PROSITE" id="PS50176">
    <property type="entry name" value="ARM_REPEAT"/>
    <property type="match status" value="3"/>
</dbReference>
<dbReference type="PROSITE" id="PS51214">
    <property type="entry name" value="IBB"/>
    <property type="match status" value="1"/>
</dbReference>
<name>IMA7_HUMAN</name>
<gene>
    <name type="primary">KPNA6</name>
    <name type="synonym">IPOA7</name>
</gene>